<keyword id="KW-0238">DNA-binding</keyword>
<keyword id="KW-0413">Isomerase</keyword>
<keyword id="KW-0460">Magnesium</keyword>
<keyword id="KW-0479">Metal-binding</keyword>
<keyword id="KW-0799">Topoisomerase</keyword>
<accession>A0A0L0P6P7</accession>
<organism>
    <name type="scientific">Candidozyma auris</name>
    <name type="common">Yeast</name>
    <name type="synonym">Candida auris</name>
    <dbReference type="NCBI Taxonomy" id="498019"/>
    <lineage>
        <taxon>Eukaryota</taxon>
        <taxon>Fungi</taxon>
        <taxon>Dikarya</taxon>
        <taxon>Ascomycota</taxon>
        <taxon>Saccharomycotina</taxon>
        <taxon>Pichiomycetes</taxon>
        <taxon>Metschnikowiaceae</taxon>
        <taxon>Candidozyma</taxon>
    </lineage>
</organism>
<reference key="1">
    <citation type="journal article" date="2015" name="BMC Genomics">
        <title>Draft genome of a commonly misdiagnosed multidrug resistant pathogen Candida auris.</title>
        <authorList>
            <person name="Chatterjee S."/>
            <person name="Alampalli S.V."/>
            <person name="Nageshan R.K."/>
            <person name="Chettiar S.T."/>
            <person name="Joshi S."/>
            <person name="Tatu U.S."/>
        </authorList>
    </citation>
    <scope>NUCLEOTIDE SEQUENCE [LARGE SCALE GENOMIC DNA]</scope>
    <source>
        <strain>6684</strain>
    </source>
</reference>
<protein>
    <recommendedName>
        <fullName evidence="5">DNA topoisomerase 3</fullName>
        <ecNumber evidence="3">5.6.2.1</ecNumber>
    </recommendedName>
    <alternativeName>
        <fullName evidence="5">DNA topoisomerase III</fullName>
    </alternativeName>
</protein>
<evidence type="ECO:0000255" key="1">
    <source>
        <dbReference type="PROSITE-ProRule" id="PRU00995"/>
    </source>
</evidence>
<evidence type="ECO:0000255" key="2">
    <source>
        <dbReference type="PROSITE-ProRule" id="PRU01383"/>
    </source>
</evidence>
<evidence type="ECO:0000255" key="3">
    <source>
        <dbReference type="PROSITE-ProRule" id="PRU10131"/>
    </source>
</evidence>
<evidence type="ECO:0000255" key="4">
    <source>
        <dbReference type="RuleBase" id="RU362092"/>
    </source>
</evidence>
<evidence type="ECO:0000305" key="5"/>
<feature type="chain" id="PRO_0000447629" description="DNA topoisomerase 3">
    <location>
        <begin position="1"/>
        <end position="640"/>
    </location>
</feature>
<feature type="domain" description="Toprim" evidence="1">
    <location>
        <begin position="21"/>
        <end position="175"/>
    </location>
</feature>
<feature type="domain" description="Topo IA-type catalytic" evidence="2">
    <location>
        <begin position="189"/>
        <end position="618"/>
    </location>
</feature>
<feature type="active site" description="O-(5'-phospho-DNA)-tyrosine intermediate" evidence="2">
    <location>
        <position position="354"/>
    </location>
</feature>
<feature type="binding site" evidence="1">
    <location>
        <position position="27"/>
    </location>
    <ligand>
        <name>Mg(2+)</name>
        <dbReference type="ChEBI" id="CHEBI:18420"/>
        <label>1</label>
        <note>catalytic</note>
    </ligand>
</feature>
<feature type="binding site" evidence="1">
    <location>
        <position position="137"/>
    </location>
    <ligand>
        <name>Mg(2+)</name>
        <dbReference type="ChEBI" id="CHEBI:18420"/>
        <label>1</label>
        <note>catalytic</note>
    </ligand>
</feature>
<feature type="binding site" evidence="1">
    <location>
        <position position="137"/>
    </location>
    <ligand>
        <name>Mg(2+)</name>
        <dbReference type="ChEBI" id="CHEBI:18420"/>
        <label>2</label>
    </ligand>
</feature>
<feature type="binding site" evidence="1">
    <location>
        <position position="139"/>
    </location>
    <ligand>
        <name>Mg(2+)</name>
        <dbReference type="ChEBI" id="CHEBI:18420"/>
        <label>2</label>
    </ligand>
</feature>
<proteinExistence type="inferred from homology"/>
<gene>
    <name type="primary">TOP3</name>
    <name type="ORF">QG37_00967</name>
</gene>
<sequence length="640" mass="72613">MLISTLPLLLHEQLAQSTRMRVLCVAEKNSIAKEVAKILSGGRARPRNSLYKYVKNYDFQYTFQGLGPCDVTMTAVAGHVLTTDFGPEYAWGKCPPGRLFDAPFLTKPPPDRDQRAGILKNIIREARNADRLMIWTDCDREGEYIGWEIMSVAQGANPRLNLQTTWRAQFSHLEPQHIVAAANNPKALDMKLVAAVECRTEFDLRVGTLFTRFLTNIYKSKRLVGEKEVVSYGTCQFPTLSFVVDRYVRVRNFRPEPFWSIDLAVTKNGQKVNFSWSRNHLFDRMFVYVIYAQLLEGPQKPRIVGVSTKPTSHYKPLPLTTVDLQKCCSRYFKMLAKAALDAAELLYTAGYISYPRTETDQFPAKLDLKGYITKQTLSLDWGTHATRLLQGSFRPPRGGKHDDKAHPPIYPVKSASLDTLRPDQRKVYEFVVRRFLACCSDDARGLQTKVDLQWRSERFTALGLQVTERNFLDVYPYSDWKSLAQLPEFAEGEEVTPSSCKVKEGKTSPPNYMTEAELIALMDANGIGTDATIADHVEKIAQRNYVTRRKIGKSEVFIPTSLGISLIDAFDAILIDRISLLKPFLRRAMEGFLQKISRGEITKQDVISQLLPLYKEAFMESNQKGHVISDTFIQTSRGLS</sequence>
<dbReference type="EC" id="5.6.2.1" evidence="3"/>
<dbReference type="EMBL" id="LGST01000007">
    <property type="protein sequence ID" value="KNE02028.1"/>
    <property type="molecule type" value="Genomic_DNA"/>
</dbReference>
<dbReference type="RefSeq" id="XP_018171751.1">
    <property type="nucleotide sequence ID" value="XM_018310517.1"/>
</dbReference>
<dbReference type="SMR" id="A0A0L0P6P7"/>
<dbReference type="VEuPathDB" id="FungiDB:B9J08_003761"/>
<dbReference type="VEuPathDB" id="FungiDB:CJI96_0002292"/>
<dbReference type="VEuPathDB" id="FungiDB:CJI97_003833"/>
<dbReference type="VEuPathDB" id="FungiDB:CJJ07_003661"/>
<dbReference type="VEuPathDB" id="FungiDB:CJJ09_000347"/>
<dbReference type="VEuPathDB" id="FungiDB:QG37_00967"/>
<dbReference type="Proteomes" id="UP000037122">
    <property type="component" value="Unassembled WGS sequence"/>
</dbReference>
<dbReference type="GO" id="GO:0005634">
    <property type="term" value="C:nucleus"/>
    <property type="evidence" value="ECO:0007669"/>
    <property type="project" value="TreeGrafter"/>
</dbReference>
<dbReference type="GO" id="GO:0031422">
    <property type="term" value="C:RecQ family helicase-topoisomerase III complex"/>
    <property type="evidence" value="ECO:0007669"/>
    <property type="project" value="TreeGrafter"/>
</dbReference>
<dbReference type="GO" id="GO:0003677">
    <property type="term" value="F:DNA binding"/>
    <property type="evidence" value="ECO:0007669"/>
    <property type="project" value="UniProtKB-KW"/>
</dbReference>
<dbReference type="GO" id="GO:0003917">
    <property type="term" value="F:DNA topoisomerase type I (single strand cut, ATP-independent) activity"/>
    <property type="evidence" value="ECO:0007669"/>
    <property type="project" value="UniProtKB-EC"/>
</dbReference>
<dbReference type="GO" id="GO:0046872">
    <property type="term" value="F:metal ion binding"/>
    <property type="evidence" value="ECO:0007669"/>
    <property type="project" value="UniProtKB-KW"/>
</dbReference>
<dbReference type="GO" id="GO:0006310">
    <property type="term" value="P:DNA recombination"/>
    <property type="evidence" value="ECO:0007669"/>
    <property type="project" value="TreeGrafter"/>
</dbReference>
<dbReference type="GO" id="GO:0006281">
    <property type="term" value="P:DNA repair"/>
    <property type="evidence" value="ECO:0007669"/>
    <property type="project" value="TreeGrafter"/>
</dbReference>
<dbReference type="GO" id="GO:0006265">
    <property type="term" value="P:DNA topological change"/>
    <property type="evidence" value="ECO:0007669"/>
    <property type="project" value="InterPro"/>
</dbReference>
<dbReference type="CDD" id="cd00186">
    <property type="entry name" value="TOP1Ac"/>
    <property type="match status" value="1"/>
</dbReference>
<dbReference type="CDD" id="cd03362">
    <property type="entry name" value="TOPRIM_TopoIA_TopoIII"/>
    <property type="match status" value="1"/>
</dbReference>
<dbReference type="FunFam" id="1.10.290.10:FF:000001">
    <property type="entry name" value="DNA topoisomerase"/>
    <property type="match status" value="1"/>
</dbReference>
<dbReference type="FunFam" id="3.40.50.140:FF:000003">
    <property type="entry name" value="DNA topoisomerase"/>
    <property type="match status" value="1"/>
</dbReference>
<dbReference type="Gene3D" id="3.40.50.140">
    <property type="match status" value="1"/>
</dbReference>
<dbReference type="Gene3D" id="1.10.460.10">
    <property type="entry name" value="Topoisomerase I, domain 2"/>
    <property type="match status" value="1"/>
</dbReference>
<dbReference type="Gene3D" id="2.70.20.10">
    <property type="entry name" value="Topoisomerase I, domain 3"/>
    <property type="match status" value="1"/>
</dbReference>
<dbReference type="Gene3D" id="1.10.290.10">
    <property type="entry name" value="Topoisomerase I, domain 4"/>
    <property type="match status" value="1"/>
</dbReference>
<dbReference type="InterPro" id="IPR000380">
    <property type="entry name" value="Topo_IA"/>
</dbReference>
<dbReference type="InterPro" id="IPR003601">
    <property type="entry name" value="Topo_IA_2"/>
</dbReference>
<dbReference type="InterPro" id="IPR023406">
    <property type="entry name" value="Topo_IA_AS"/>
</dbReference>
<dbReference type="InterPro" id="IPR013497">
    <property type="entry name" value="Topo_IA_cen"/>
</dbReference>
<dbReference type="InterPro" id="IPR013824">
    <property type="entry name" value="Topo_IA_cen_sub1"/>
</dbReference>
<dbReference type="InterPro" id="IPR013825">
    <property type="entry name" value="Topo_IA_cen_sub2"/>
</dbReference>
<dbReference type="InterPro" id="IPR013826">
    <property type="entry name" value="Topo_IA_cen_sub3"/>
</dbReference>
<dbReference type="InterPro" id="IPR023405">
    <property type="entry name" value="Topo_IA_core_domain"/>
</dbReference>
<dbReference type="InterPro" id="IPR003602">
    <property type="entry name" value="Topo_IA_DNA-bd_dom"/>
</dbReference>
<dbReference type="InterPro" id="IPR006171">
    <property type="entry name" value="TOPRIM_dom"/>
</dbReference>
<dbReference type="InterPro" id="IPR034144">
    <property type="entry name" value="TOPRIM_TopoIII"/>
</dbReference>
<dbReference type="PANTHER" id="PTHR11390:SF21">
    <property type="entry name" value="DNA TOPOISOMERASE 3-ALPHA"/>
    <property type="match status" value="1"/>
</dbReference>
<dbReference type="PANTHER" id="PTHR11390">
    <property type="entry name" value="PROKARYOTIC DNA TOPOISOMERASE"/>
    <property type="match status" value="1"/>
</dbReference>
<dbReference type="Pfam" id="PF01131">
    <property type="entry name" value="Topoisom_bac"/>
    <property type="match status" value="1"/>
</dbReference>
<dbReference type="Pfam" id="PF01751">
    <property type="entry name" value="Toprim"/>
    <property type="match status" value="1"/>
</dbReference>
<dbReference type="PRINTS" id="PR00417">
    <property type="entry name" value="PRTPISMRASEI"/>
</dbReference>
<dbReference type="SMART" id="SM00437">
    <property type="entry name" value="TOP1Ac"/>
    <property type="match status" value="1"/>
</dbReference>
<dbReference type="SMART" id="SM00436">
    <property type="entry name" value="TOP1Bc"/>
    <property type="match status" value="1"/>
</dbReference>
<dbReference type="SMART" id="SM00493">
    <property type="entry name" value="TOPRIM"/>
    <property type="match status" value="1"/>
</dbReference>
<dbReference type="SUPFAM" id="SSF56712">
    <property type="entry name" value="Prokaryotic type I DNA topoisomerase"/>
    <property type="match status" value="1"/>
</dbReference>
<dbReference type="PROSITE" id="PS00396">
    <property type="entry name" value="TOPO_IA_1"/>
    <property type="match status" value="1"/>
</dbReference>
<dbReference type="PROSITE" id="PS52039">
    <property type="entry name" value="TOPO_IA_2"/>
    <property type="match status" value="1"/>
</dbReference>
<dbReference type="PROSITE" id="PS50880">
    <property type="entry name" value="TOPRIM"/>
    <property type="match status" value="1"/>
</dbReference>
<name>TOP3_CANAR</name>
<comment type="function">
    <text evidence="4">Introduces a single-strand break via transesterification at a target site in duplex DNA. Releases the supercoiling and torsional tension of DNA introduced during the DNA replication and transcription by transiently cleaving and rejoining one strand of the DNA duplex. The scissile phosphodiester is attacked by the catalytic tyrosine of the enzyme, resulting in the formation of a DNA-(5'-phosphotyrosyl)-enzyme intermediate and the expulsion of a 3'-OH DNA strand.</text>
</comment>
<comment type="catalytic activity">
    <reaction evidence="3">
        <text>ATP-independent breakage of single-stranded DNA, followed by passage and rejoining.</text>
        <dbReference type="EC" id="5.6.2.1"/>
    </reaction>
</comment>
<comment type="cofactor">
    <cofactor evidence="1">
        <name>Mg(2+)</name>
        <dbReference type="ChEBI" id="CHEBI:18420"/>
    </cofactor>
    <text evidence="1">Binds two Mg(2+) per subunit.</text>
</comment>
<comment type="similarity">
    <text evidence="2 5">Belongs to the type IA topoisomerase family.</text>
</comment>